<gene>
    <name evidence="1" type="primary">rpl6</name>
    <name type="ordered locus">MmarC5_0163</name>
</gene>
<organism>
    <name type="scientific">Methanococcus maripaludis (strain C5 / ATCC BAA-1333)</name>
    <dbReference type="NCBI Taxonomy" id="402880"/>
    <lineage>
        <taxon>Archaea</taxon>
        <taxon>Methanobacteriati</taxon>
        <taxon>Methanobacteriota</taxon>
        <taxon>Methanomada group</taxon>
        <taxon>Methanococci</taxon>
        <taxon>Methanococcales</taxon>
        <taxon>Methanococcaceae</taxon>
        <taxon>Methanococcus</taxon>
    </lineage>
</organism>
<dbReference type="EMBL" id="CP000609">
    <property type="protein sequence ID" value="ABO34480.1"/>
    <property type="molecule type" value="Genomic_DNA"/>
</dbReference>
<dbReference type="RefSeq" id="WP_011867940.1">
    <property type="nucleotide sequence ID" value="NC_009135.1"/>
</dbReference>
<dbReference type="SMR" id="A4FWA5"/>
<dbReference type="STRING" id="402880.MmarC5_0163"/>
<dbReference type="GeneID" id="4928311"/>
<dbReference type="KEGG" id="mmq:MmarC5_0163"/>
<dbReference type="eggNOG" id="arCOG04090">
    <property type="taxonomic scope" value="Archaea"/>
</dbReference>
<dbReference type="HOGENOM" id="CLU_065464_0_0_2"/>
<dbReference type="OrthoDB" id="7144at2157"/>
<dbReference type="Proteomes" id="UP000000253">
    <property type="component" value="Chromosome"/>
</dbReference>
<dbReference type="GO" id="GO:0022625">
    <property type="term" value="C:cytosolic large ribosomal subunit"/>
    <property type="evidence" value="ECO:0007669"/>
    <property type="project" value="TreeGrafter"/>
</dbReference>
<dbReference type="GO" id="GO:0019843">
    <property type="term" value="F:rRNA binding"/>
    <property type="evidence" value="ECO:0007669"/>
    <property type="project" value="UniProtKB-UniRule"/>
</dbReference>
<dbReference type="GO" id="GO:0003735">
    <property type="term" value="F:structural constituent of ribosome"/>
    <property type="evidence" value="ECO:0007669"/>
    <property type="project" value="InterPro"/>
</dbReference>
<dbReference type="GO" id="GO:0002181">
    <property type="term" value="P:cytoplasmic translation"/>
    <property type="evidence" value="ECO:0007669"/>
    <property type="project" value="TreeGrafter"/>
</dbReference>
<dbReference type="FunFam" id="3.90.930.12:FF:000008">
    <property type="entry name" value="50S ribosomal protein L6"/>
    <property type="match status" value="1"/>
</dbReference>
<dbReference type="Gene3D" id="3.90.930.12">
    <property type="entry name" value="Ribosomal protein L6, alpha-beta domain"/>
    <property type="match status" value="2"/>
</dbReference>
<dbReference type="HAMAP" id="MF_01365_A">
    <property type="entry name" value="Ribosomal_uL6_A"/>
    <property type="match status" value="1"/>
</dbReference>
<dbReference type="InterPro" id="IPR000702">
    <property type="entry name" value="Ribosomal_uL6-like"/>
</dbReference>
<dbReference type="InterPro" id="IPR036789">
    <property type="entry name" value="Ribosomal_uL6-like_a/b-dom_sf"/>
</dbReference>
<dbReference type="InterPro" id="IPR020040">
    <property type="entry name" value="Ribosomal_uL6_a/b-dom"/>
</dbReference>
<dbReference type="InterPro" id="IPR019907">
    <property type="entry name" value="Ribosomal_uL6_arc"/>
</dbReference>
<dbReference type="InterPro" id="IPR002359">
    <property type="entry name" value="Ribosomal_uL6_CS2"/>
</dbReference>
<dbReference type="NCBIfam" id="NF004037">
    <property type="entry name" value="PRK05518.1"/>
    <property type="match status" value="1"/>
</dbReference>
<dbReference type="NCBIfam" id="TIGR03653">
    <property type="entry name" value="uL6_arch"/>
    <property type="match status" value="1"/>
</dbReference>
<dbReference type="PANTHER" id="PTHR11655:SF16">
    <property type="entry name" value="60S RIBOSOMAL PROTEIN L9"/>
    <property type="match status" value="1"/>
</dbReference>
<dbReference type="PANTHER" id="PTHR11655">
    <property type="entry name" value="60S/50S RIBOSOMAL PROTEIN L6/L9"/>
    <property type="match status" value="1"/>
</dbReference>
<dbReference type="Pfam" id="PF00347">
    <property type="entry name" value="Ribosomal_L6"/>
    <property type="match status" value="2"/>
</dbReference>
<dbReference type="PIRSF" id="PIRSF002162">
    <property type="entry name" value="Ribosomal_L6"/>
    <property type="match status" value="1"/>
</dbReference>
<dbReference type="SUPFAM" id="SSF56053">
    <property type="entry name" value="Ribosomal protein L6"/>
    <property type="match status" value="2"/>
</dbReference>
<dbReference type="PROSITE" id="PS00700">
    <property type="entry name" value="RIBOSOMAL_L6_2"/>
    <property type="match status" value="1"/>
</dbReference>
<keyword id="KW-0687">Ribonucleoprotein</keyword>
<keyword id="KW-0689">Ribosomal protein</keyword>
<keyword id="KW-0694">RNA-binding</keyword>
<keyword id="KW-0699">rRNA-binding</keyword>
<sequence>MPVAALIREEIEIPENVNVEINGNTVAVKSGAKELRRDLMYPGIEISTEDGKVVIECTFPRKVQTAIVGTYRSHIQNMITGVTDGFEYKLVIRYAHFPMKVSAKGNTVTIDNFLGEKYTRTAKIMDGVTVKVSGEEVIVSGANKEFVGQTAANIEQATKVKGRDTRIFQDGIYIVEKAGKVL</sequence>
<evidence type="ECO:0000255" key="1">
    <source>
        <dbReference type="HAMAP-Rule" id="MF_01365"/>
    </source>
</evidence>
<evidence type="ECO:0000305" key="2"/>
<accession>A4FWA5</accession>
<proteinExistence type="inferred from homology"/>
<reference key="1">
    <citation type="submission" date="2007-03" db="EMBL/GenBank/DDBJ databases">
        <title>Complete sequence of chromosome of Methanococcus maripaludis C5.</title>
        <authorList>
            <consortium name="US DOE Joint Genome Institute"/>
            <person name="Copeland A."/>
            <person name="Lucas S."/>
            <person name="Lapidus A."/>
            <person name="Barry K."/>
            <person name="Glavina del Rio T."/>
            <person name="Dalin E."/>
            <person name="Tice H."/>
            <person name="Pitluck S."/>
            <person name="Chertkov O."/>
            <person name="Brettin T."/>
            <person name="Bruce D."/>
            <person name="Han C."/>
            <person name="Detter J.C."/>
            <person name="Schmutz J."/>
            <person name="Larimer F."/>
            <person name="Land M."/>
            <person name="Hauser L."/>
            <person name="Kyrpides N."/>
            <person name="Mikhailova N."/>
            <person name="Sieprawska-Lupa M."/>
            <person name="Whitman W.B."/>
            <person name="Richardson P."/>
        </authorList>
    </citation>
    <scope>NUCLEOTIDE SEQUENCE [LARGE SCALE GENOMIC DNA]</scope>
    <source>
        <strain>C5 / ATCC BAA-1333</strain>
    </source>
</reference>
<name>RL6_METM5</name>
<feature type="chain" id="PRO_1000055258" description="Large ribosomal subunit protein uL6">
    <location>
        <begin position="1"/>
        <end position="182"/>
    </location>
</feature>
<protein>
    <recommendedName>
        <fullName evidence="1">Large ribosomal subunit protein uL6</fullName>
    </recommendedName>
    <alternativeName>
        <fullName evidence="2">50S ribosomal protein L6</fullName>
    </alternativeName>
</protein>
<comment type="function">
    <text evidence="1">This protein binds to the 23S rRNA, and is important in its secondary structure. It is located near the subunit interface in the base of the L7/L12 stalk, and near the tRNA binding site of the peptidyltransferase center.</text>
</comment>
<comment type="subunit">
    <text evidence="1">Part of the 50S ribosomal subunit.</text>
</comment>
<comment type="similarity">
    <text evidence="1">Belongs to the universal ribosomal protein uL6 family.</text>
</comment>